<organism>
    <name type="scientific">Oryctolagus cuniculus</name>
    <name type="common">Rabbit</name>
    <dbReference type="NCBI Taxonomy" id="9986"/>
    <lineage>
        <taxon>Eukaryota</taxon>
        <taxon>Metazoa</taxon>
        <taxon>Chordata</taxon>
        <taxon>Craniata</taxon>
        <taxon>Vertebrata</taxon>
        <taxon>Euteleostomi</taxon>
        <taxon>Mammalia</taxon>
        <taxon>Eutheria</taxon>
        <taxon>Euarchontoglires</taxon>
        <taxon>Glires</taxon>
        <taxon>Lagomorpha</taxon>
        <taxon>Leporidae</taxon>
        <taxon>Oryctolagus</taxon>
    </lineage>
</organism>
<reference key="1">
    <citation type="journal article" date="1996" name="Jpn. J. Ophthalmol.">
        <title>Cloning and high expression of rabbit FKBP25 in cornea.</title>
        <authorList>
            <person name="Kitagawa H."/>
            <person name="Hotta Y."/>
            <person name="Fujiki K."/>
            <person name="Kanai A."/>
        </authorList>
    </citation>
    <scope>NUCLEOTIDE SEQUENCE [MRNA] OF 2-224</scope>
    <source>
        <tissue>Cornea</tissue>
    </source>
</reference>
<evidence type="ECO:0000250" key="1"/>
<evidence type="ECO:0000250" key="2">
    <source>
        <dbReference type="UniProtKB" id="Q00688"/>
    </source>
</evidence>
<evidence type="ECO:0000250" key="3">
    <source>
        <dbReference type="UniProtKB" id="Q62446"/>
    </source>
</evidence>
<evidence type="ECO:0000255" key="4">
    <source>
        <dbReference type="PROSITE-ProRule" id="PRU00277"/>
    </source>
</evidence>
<evidence type="ECO:0000256" key="5">
    <source>
        <dbReference type="SAM" id="MobiDB-lite"/>
    </source>
</evidence>
<evidence type="ECO:0000305" key="6"/>
<accession>O46638</accession>
<feature type="initiator methionine" description="Removed" evidence="2">
    <location>
        <position position="1"/>
    </location>
</feature>
<feature type="chain" id="PRO_0000075309" description="Peptidyl-prolyl cis-trans isomerase FKBP3">
    <location>
        <begin position="2"/>
        <end position="224"/>
    </location>
</feature>
<feature type="domain" description="PPIase FKBP-type" evidence="4">
    <location>
        <begin position="128"/>
        <end position="224"/>
    </location>
</feature>
<feature type="region of interest" description="Disordered" evidence="5">
    <location>
        <begin position="87"/>
        <end position="119"/>
    </location>
</feature>
<feature type="compositionally biased region" description="Basic and acidic residues" evidence="5">
    <location>
        <begin position="89"/>
        <end position="102"/>
    </location>
</feature>
<feature type="modified residue" description="N-acetylalanine" evidence="2">
    <location>
        <position position="2"/>
    </location>
</feature>
<feature type="modified residue" description="Phosphoserine" evidence="2">
    <location>
        <position position="36"/>
    </location>
</feature>
<feature type="modified residue" description="N6-acetyllysine" evidence="3">
    <location>
        <position position="99"/>
    </location>
</feature>
<feature type="modified residue" description="Phosphoserine" evidence="2">
    <location>
        <position position="152"/>
    </location>
</feature>
<feature type="modified residue" description="N6-acetyllysine" evidence="2">
    <location>
        <position position="170"/>
    </location>
</feature>
<name>FKBP3_RABIT</name>
<comment type="function">
    <text evidence="1">FK506- and rapamycin-binding proteins (FKBPs) constitute a family of receptors for the two immunosuppressants which inhibit T-cell proliferation by arresting two distinct cytoplasmic signal transmission pathways. PPIases accelerate the folding of proteins (By similarity).</text>
</comment>
<comment type="catalytic activity">
    <reaction>
        <text>[protein]-peptidylproline (omega=180) = [protein]-peptidylproline (omega=0)</text>
        <dbReference type="Rhea" id="RHEA:16237"/>
        <dbReference type="Rhea" id="RHEA-COMP:10747"/>
        <dbReference type="Rhea" id="RHEA-COMP:10748"/>
        <dbReference type="ChEBI" id="CHEBI:83833"/>
        <dbReference type="ChEBI" id="CHEBI:83834"/>
        <dbReference type="EC" id="5.2.1.8"/>
    </reaction>
</comment>
<comment type="activity regulation">
    <text>Inhibited preferentially by rapamycin over FK506.</text>
</comment>
<comment type="subcellular location">
    <subcellularLocation>
        <location>Nucleus</location>
    </subcellularLocation>
</comment>
<comment type="similarity">
    <text evidence="6">Belongs to the FKBP-type PPIase family.</text>
</comment>
<dbReference type="EC" id="5.2.1.8"/>
<dbReference type="EMBL" id="D82876">
    <property type="protein sequence ID" value="BAA24412.1"/>
    <property type="molecule type" value="mRNA"/>
</dbReference>
<dbReference type="RefSeq" id="XP_002718212.1">
    <property type="nucleotide sequence ID" value="XM_002718166.5"/>
</dbReference>
<dbReference type="BMRB" id="O46638"/>
<dbReference type="SMR" id="O46638"/>
<dbReference type="FunCoup" id="O46638">
    <property type="interactions" value="1089"/>
</dbReference>
<dbReference type="STRING" id="9986.ENSOCUP00000017800"/>
<dbReference type="PaxDb" id="9986-ENSOCUP00000006516"/>
<dbReference type="GeneID" id="100009004"/>
<dbReference type="KEGG" id="ocu:100009004"/>
<dbReference type="CTD" id="2287"/>
<dbReference type="eggNOG" id="KOG0544">
    <property type="taxonomic scope" value="Eukaryota"/>
</dbReference>
<dbReference type="HOGENOM" id="CLU_013615_12_2_1"/>
<dbReference type="InParanoid" id="O46638"/>
<dbReference type="OMA" id="IEPDWAY"/>
<dbReference type="OrthoDB" id="1902587at2759"/>
<dbReference type="TreeFam" id="TF105293"/>
<dbReference type="Proteomes" id="UP000001811">
    <property type="component" value="Unplaced"/>
</dbReference>
<dbReference type="GO" id="GO:0005634">
    <property type="term" value="C:nucleus"/>
    <property type="evidence" value="ECO:0007669"/>
    <property type="project" value="UniProtKB-SubCell"/>
</dbReference>
<dbReference type="GO" id="GO:0003755">
    <property type="term" value="F:peptidyl-prolyl cis-trans isomerase activity"/>
    <property type="evidence" value="ECO:0007669"/>
    <property type="project" value="UniProtKB-KW"/>
</dbReference>
<dbReference type="CDD" id="cd21063">
    <property type="entry name" value="BTHB_FKBP25"/>
    <property type="match status" value="1"/>
</dbReference>
<dbReference type="FunFam" id="1.10.720.80:FF:000002">
    <property type="entry name" value="Peptidylprolyl isomerase"/>
    <property type="match status" value="1"/>
</dbReference>
<dbReference type="FunFam" id="3.10.50.40:FF:000023">
    <property type="entry name" value="Peptidylprolyl isomerase"/>
    <property type="match status" value="1"/>
</dbReference>
<dbReference type="Gene3D" id="1.10.720.80">
    <property type="match status" value="1"/>
</dbReference>
<dbReference type="Gene3D" id="3.10.50.40">
    <property type="match status" value="1"/>
</dbReference>
<dbReference type="InterPro" id="IPR043368">
    <property type="entry name" value="FKBP3"/>
</dbReference>
<dbReference type="InterPro" id="IPR041200">
    <property type="entry name" value="FKBP3_BTHB"/>
</dbReference>
<dbReference type="InterPro" id="IPR046357">
    <property type="entry name" value="PPIase_dom_sf"/>
</dbReference>
<dbReference type="InterPro" id="IPR001179">
    <property type="entry name" value="PPIase_FKBP_dom"/>
</dbReference>
<dbReference type="PANTHER" id="PTHR46493">
    <property type="entry name" value="PEPTIDYL-PROLYL CIS-TRANS ISOMERASE FKBP3"/>
    <property type="match status" value="1"/>
</dbReference>
<dbReference type="PANTHER" id="PTHR46493:SF1">
    <property type="entry name" value="PEPTIDYL-PROLYL CIS-TRANS ISOMERASE FKBP3"/>
    <property type="match status" value="1"/>
</dbReference>
<dbReference type="Pfam" id="PF18410">
    <property type="entry name" value="BTHB"/>
    <property type="match status" value="1"/>
</dbReference>
<dbReference type="Pfam" id="PF00254">
    <property type="entry name" value="FKBP_C"/>
    <property type="match status" value="1"/>
</dbReference>
<dbReference type="SUPFAM" id="SSF54534">
    <property type="entry name" value="FKBP-like"/>
    <property type="match status" value="1"/>
</dbReference>
<dbReference type="PROSITE" id="PS50059">
    <property type="entry name" value="FKBP_PPIASE"/>
    <property type="match status" value="1"/>
</dbReference>
<proteinExistence type="evidence at transcript level"/>
<protein>
    <recommendedName>
        <fullName>Peptidyl-prolyl cis-trans isomerase FKBP3</fullName>
        <shortName>PPIase FKBP3</shortName>
        <ecNumber>5.2.1.8</ecNumber>
    </recommendedName>
    <alternativeName>
        <fullName>25 kDa FK506-binding protein</fullName>
        <shortName>25 kDa FKBP</shortName>
        <shortName>FKBP-25</shortName>
    </alternativeName>
    <alternativeName>
        <fullName>FK506-binding protein 3</fullName>
        <shortName>FKBP-3</shortName>
    </alternativeName>
    <alternativeName>
        <fullName>Immunophilin FKBP25</fullName>
    </alternativeName>
    <alternativeName>
        <fullName>Rapamycin-selective 25 kDa immunophilin</fullName>
    </alternativeName>
    <alternativeName>
        <fullName>Rotamase</fullName>
    </alternativeName>
</protein>
<gene>
    <name type="primary">FKBP3</name>
    <name type="synonym">FKBP25</name>
</gene>
<keyword id="KW-0007">Acetylation</keyword>
<keyword id="KW-0413">Isomerase</keyword>
<keyword id="KW-0539">Nucleus</keyword>
<keyword id="KW-0597">Phosphoprotein</keyword>
<keyword id="KW-1185">Reference proteome</keyword>
<keyword id="KW-0697">Rotamase</keyword>
<sequence>MAAAVPQRAWTVEQLRSEQLPKKDIIKFLQDHGSDSFLAEHKLLGNIKNVAKTANKDHLVTAYNHLFETKRFKGSENVTKVSEQVKNVKLNEDKPKETKSEETPDEGPPKYTKSVLKKGDKTNFPKKGDVVHCWYTGTLQDGTVFDTNIQTSSKKKKNAKPLSFKVGVGKVIRGWDEALLTMSKGEKARLEIEPEWAYGKKGQPDAKIPPNAKLIFEVELVDID</sequence>